<proteinExistence type="inferred from homology"/>
<accession>Q9XJJ7</accession>
<dbReference type="EMBL" id="AF125520">
    <property type="protein sequence ID" value="AAD25453.1"/>
    <property type="molecule type" value="Genomic_DNA"/>
</dbReference>
<dbReference type="RefSeq" id="NP_049508.1">
    <property type="nucleotide sequence ID" value="NC_000924.1"/>
</dbReference>
<dbReference type="GeneID" id="1261962"/>
<dbReference type="KEGG" id="vg:1261962"/>
<dbReference type="Proteomes" id="UP000002135">
    <property type="component" value="Genome"/>
</dbReference>
<dbReference type="GO" id="GO:0020002">
    <property type="term" value="C:host cell plasma membrane"/>
    <property type="evidence" value="ECO:0007669"/>
    <property type="project" value="UniProtKB-SubCell"/>
</dbReference>
<dbReference type="GO" id="GO:0016020">
    <property type="term" value="C:membrane"/>
    <property type="evidence" value="ECO:0007669"/>
    <property type="project" value="UniProtKB-KW"/>
</dbReference>
<dbReference type="GO" id="GO:0044659">
    <property type="term" value="P:viral release from host cell by cytolysis"/>
    <property type="evidence" value="ECO:0007669"/>
    <property type="project" value="InterPro"/>
</dbReference>
<dbReference type="InterPro" id="IPR010346">
    <property type="entry name" value="O-spanin"/>
</dbReference>
<dbReference type="Pfam" id="PF06085">
    <property type="entry name" value="Rz1"/>
    <property type="match status" value="1"/>
</dbReference>
<reference key="1">
    <citation type="journal article" date="1999" name="J. Bacteriol.">
        <title>Sequence of Shiga toxin 2 phage 933W from Escherichia coli O157:H7: Shiga toxin as a phage late-gene product.</title>
        <authorList>
            <person name="Plunkett G. III"/>
            <person name="Rose D.J."/>
            <person name="Durfee T.J."/>
            <person name="Blattner F.R."/>
        </authorList>
    </citation>
    <scope>NUCLEOTIDE SEQUENCE [LARGE SCALE GENOMIC DNA]</scope>
</reference>
<comment type="function">
    <text evidence="1">Component of the spanin complex that disrupts the host outer membrane and causes cell lysis during virus exit. The spanin complex conducts the final step in host lysis by disrupting the outer membrane after holin and endolysin action have permeabilized the inner membrane and degraded the host peptidoglycans (By similarity).</text>
</comment>
<comment type="subunit">
    <text evidence="1">Homodimer; disulfide-linked. Interacts (via C-terminus) with RZ (via C-terminus). Part of the spanin complex which spans the entire periplasmic space. The spanin complex is composed of spanin, inner membrane subunit and spanin, outer membrane subunit (By similarity).</text>
</comment>
<comment type="subcellular location">
    <subcellularLocation>
        <location evidence="1">Host cell outer membrane</location>
        <topology evidence="1">Lipid-anchor</topology>
        <orientation evidence="1">Periplasmic side</orientation>
    </subcellularLocation>
</comment>
<comment type="similarity">
    <text evidence="2">Belongs to the lambdalikevirus o-spanin family.</text>
</comment>
<sequence length="61" mass="6509">MRELKMKLCVLMLPLVVSACGSTPPAPVPCVKPPAPPAWIMQPAPDWQTPLNGIISSSERG</sequence>
<evidence type="ECO:0000250" key="1"/>
<evidence type="ECO:0000305" key="2"/>
<organism>
    <name type="scientific">Escherichia phage 933W</name>
    <name type="common">Bacteriophage 933W</name>
    <dbReference type="NCBI Taxonomy" id="10730"/>
    <lineage>
        <taxon>Viruses</taxon>
        <taxon>Duplodnaviria</taxon>
        <taxon>Heunggongvirae</taxon>
        <taxon>Uroviricota</taxon>
        <taxon>Caudoviricetes</taxon>
        <taxon>Sepvirinae</taxon>
        <taxon>Traversvirus</taxon>
        <taxon>Traversvirus tv933W</taxon>
    </lineage>
</organism>
<name>SPAN2_BP933</name>
<gene>
    <name type="primary">Rz1</name>
    <name type="ordered locus">L109</name>
</gene>
<keyword id="KW-0204">Cytolysis</keyword>
<keyword id="KW-1015">Disulfide bond</keyword>
<keyword id="KW-0578">Host cell lysis by virus</keyword>
<keyword id="KW-1033">Host cell outer membrane</keyword>
<keyword id="KW-1043">Host membrane</keyword>
<keyword id="KW-0449">Lipoprotein</keyword>
<keyword id="KW-0472">Membrane</keyword>
<keyword id="KW-0564">Palmitate</keyword>
<keyword id="KW-1185">Reference proteome</keyword>
<keyword id="KW-0732">Signal</keyword>
<keyword id="KW-1188">Viral release from host cell</keyword>
<feature type="signal peptide" evidence="1">
    <location>
        <begin position="1"/>
        <end position="19"/>
    </location>
</feature>
<feature type="chain" id="PRO_0000003364" description="Spanin, outer membrane subunit">
    <location>
        <begin position="20"/>
        <end position="61"/>
    </location>
</feature>
<feature type="lipid moiety-binding region" description="N-palmitoyl cysteine; by host" evidence="1">
    <location>
        <position position="20"/>
    </location>
</feature>
<feature type="lipid moiety-binding region" description="S-diacylglycerol cysteine; by host" evidence="1">
    <location>
        <position position="20"/>
    </location>
</feature>
<feature type="disulfide bond" description="Interchain" evidence="1">
    <location>
        <position position="30"/>
    </location>
</feature>
<protein>
    <recommendedName>
        <fullName>Spanin, outer membrane subunit</fullName>
        <shortName>o-spanin</shortName>
    </recommendedName>
    <alternativeName>
        <fullName>Outer membrane lipoprotein Rz1</fullName>
    </alternativeName>
</protein>
<organismHost>
    <name type="scientific">Escherichia coli O157:H7</name>
    <dbReference type="NCBI Taxonomy" id="83334"/>
</organismHost>